<reference key="1">
    <citation type="submission" date="2008-01" db="EMBL/GenBank/DDBJ databases">
        <title>Complete sequence of Pseudomonas putida GB-1.</title>
        <authorList>
            <consortium name="US DOE Joint Genome Institute"/>
            <person name="Copeland A."/>
            <person name="Lucas S."/>
            <person name="Lapidus A."/>
            <person name="Barry K."/>
            <person name="Glavina del Rio T."/>
            <person name="Dalin E."/>
            <person name="Tice H."/>
            <person name="Pitluck S."/>
            <person name="Bruce D."/>
            <person name="Goodwin L."/>
            <person name="Chertkov O."/>
            <person name="Brettin T."/>
            <person name="Detter J.C."/>
            <person name="Han C."/>
            <person name="Kuske C.R."/>
            <person name="Schmutz J."/>
            <person name="Larimer F."/>
            <person name="Land M."/>
            <person name="Hauser L."/>
            <person name="Kyrpides N."/>
            <person name="Kim E."/>
            <person name="McCarthy J.K."/>
            <person name="Richardson P."/>
        </authorList>
    </citation>
    <scope>NUCLEOTIDE SEQUENCE [LARGE SCALE GENOMIC DNA]</scope>
    <source>
        <strain>GB-1</strain>
    </source>
</reference>
<gene>
    <name type="ordered locus">PputGB1_3833</name>
</gene>
<organism>
    <name type="scientific">Pseudomonas putida (strain GB-1)</name>
    <dbReference type="NCBI Taxonomy" id="76869"/>
    <lineage>
        <taxon>Bacteria</taxon>
        <taxon>Pseudomonadati</taxon>
        <taxon>Pseudomonadota</taxon>
        <taxon>Gammaproteobacteria</taxon>
        <taxon>Pseudomonadales</taxon>
        <taxon>Pseudomonadaceae</taxon>
        <taxon>Pseudomonas</taxon>
    </lineage>
</organism>
<evidence type="ECO:0000255" key="1">
    <source>
        <dbReference type="HAMAP-Rule" id="MF_00274"/>
    </source>
</evidence>
<evidence type="ECO:0000256" key="2">
    <source>
        <dbReference type="SAM" id="MobiDB-lite"/>
    </source>
</evidence>
<feature type="chain" id="PRO_1000078767" description="Nucleoid-associated protein PputGB1_3833">
    <location>
        <begin position="1"/>
        <end position="111"/>
    </location>
</feature>
<feature type="region of interest" description="Disordered" evidence="2">
    <location>
        <begin position="1"/>
        <end position="25"/>
    </location>
</feature>
<feature type="region of interest" description="Disordered" evidence="2">
    <location>
        <begin position="87"/>
        <end position="111"/>
    </location>
</feature>
<keyword id="KW-0963">Cytoplasm</keyword>
<keyword id="KW-0238">DNA-binding</keyword>
<proteinExistence type="inferred from homology"/>
<accession>B0KPW8</accession>
<dbReference type="EMBL" id="CP000926">
    <property type="protein sequence ID" value="ABY99723.1"/>
    <property type="molecule type" value="Genomic_DNA"/>
</dbReference>
<dbReference type="RefSeq" id="WP_003254305.1">
    <property type="nucleotide sequence ID" value="NC_010322.1"/>
</dbReference>
<dbReference type="SMR" id="B0KPW8"/>
<dbReference type="KEGG" id="ppg:PputGB1_3833"/>
<dbReference type="eggNOG" id="COG0718">
    <property type="taxonomic scope" value="Bacteria"/>
</dbReference>
<dbReference type="HOGENOM" id="CLU_140930_0_0_6"/>
<dbReference type="Proteomes" id="UP000002157">
    <property type="component" value="Chromosome"/>
</dbReference>
<dbReference type="GO" id="GO:0043590">
    <property type="term" value="C:bacterial nucleoid"/>
    <property type="evidence" value="ECO:0007669"/>
    <property type="project" value="UniProtKB-UniRule"/>
</dbReference>
<dbReference type="GO" id="GO:0005829">
    <property type="term" value="C:cytosol"/>
    <property type="evidence" value="ECO:0007669"/>
    <property type="project" value="TreeGrafter"/>
</dbReference>
<dbReference type="GO" id="GO:0003677">
    <property type="term" value="F:DNA binding"/>
    <property type="evidence" value="ECO:0007669"/>
    <property type="project" value="UniProtKB-UniRule"/>
</dbReference>
<dbReference type="FunFam" id="3.30.1310.10:FF:000001">
    <property type="entry name" value="Nucleoid-associated protein YbaB"/>
    <property type="match status" value="1"/>
</dbReference>
<dbReference type="Gene3D" id="3.30.1310.10">
    <property type="entry name" value="Nucleoid-associated protein YbaB-like domain"/>
    <property type="match status" value="1"/>
</dbReference>
<dbReference type="HAMAP" id="MF_00274">
    <property type="entry name" value="DNA_YbaB_EbfC"/>
    <property type="match status" value="1"/>
</dbReference>
<dbReference type="InterPro" id="IPR036894">
    <property type="entry name" value="YbaB-like_sf"/>
</dbReference>
<dbReference type="InterPro" id="IPR004401">
    <property type="entry name" value="YbaB/EbfC"/>
</dbReference>
<dbReference type="NCBIfam" id="TIGR00103">
    <property type="entry name" value="DNA_YbaB_EbfC"/>
    <property type="match status" value="1"/>
</dbReference>
<dbReference type="PANTHER" id="PTHR33449">
    <property type="entry name" value="NUCLEOID-ASSOCIATED PROTEIN YBAB"/>
    <property type="match status" value="1"/>
</dbReference>
<dbReference type="PANTHER" id="PTHR33449:SF1">
    <property type="entry name" value="NUCLEOID-ASSOCIATED PROTEIN YBAB"/>
    <property type="match status" value="1"/>
</dbReference>
<dbReference type="Pfam" id="PF02575">
    <property type="entry name" value="YbaB_DNA_bd"/>
    <property type="match status" value="1"/>
</dbReference>
<dbReference type="PIRSF" id="PIRSF004555">
    <property type="entry name" value="UCP004555"/>
    <property type="match status" value="1"/>
</dbReference>
<dbReference type="SUPFAM" id="SSF82607">
    <property type="entry name" value="YbaB-like"/>
    <property type="match status" value="1"/>
</dbReference>
<sequence>MMKGGMAGLMKQAQQMQEKMQKMQEELANAEVTGQSGGGLVSVVMTGRHDVKRVSIDQSLMSTDEDDKEVLEDLIAAALNDAVRKVEQSSQEKMGGMTAGMQLPPGFKMPF</sequence>
<comment type="function">
    <text evidence="1">Binds to DNA and alters its conformation. May be involved in regulation of gene expression, nucleoid organization and DNA protection.</text>
</comment>
<comment type="subunit">
    <text evidence="1">Homodimer.</text>
</comment>
<comment type="subcellular location">
    <subcellularLocation>
        <location evidence="1">Cytoplasm</location>
        <location evidence="1">Nucleoid</location>
    </subcellularLocation>
</comment>
<comment type="similarity">
    <text evidence="1">Belongs to the YbaB/EbfC family.</text>
</comment>
<protein>
    <recommendedName>
        <fullName evidence="1">Nucleoid-associated protein PputGB1_3833</fullName>
    </recommendedName>
</protein>
<name>Y3833_PSEPG</name>